<proteinExistence type="inferred from homology"/>
<dbReference type="EC" id="4.2.1.11" evidence="1"/>
<dbReference type="EMBL" id="BX640448">
    <property type="protein sequence ID" value="CAE35677.1"/>
    <property type="molecule type" value="Genomic_DNA"/>
</dbReference>
<dbReference type="RefSeq" id="WP_003813700.1">
    <property type="nucleotide sequence ID" value="NC_002927.3"/>
</dbReference>
<dbReference type="SMR" id="Q7WD75"/>
<dbReference type="GeneID" id="93205034"/>
<dbReference type="KEGG" id="bbr:BB3703"/>
<dbReference type="eggNOG" id="COG0148">
    <property type="taxonomic scope" value="Bacteria"/>
</dbReference>
<dbReference type="HOGENOM" id="CLU_031223_2_1_4"/>
<dbReference type="UniPathway" id="UPA00109">
    <property type="reaction ID" value="UER00187"/>
</dbReference>
<dbReference type="Proteomes" id="UP000001027">
    <property type="component" value="Chromosome"/>
</dbReference>
<dbReference type="GO" id="GO:0009986">
    <property type="term" value="C:cell surface"/>
    <property type="evidence" value="ECO:0007669"/>
    <property type="project" value="UniProtKB-SubCell"/>
</dbReference>
<dbReference type="GO" id="GO:0005576">
    <property type="term" value="C:extracellular region"/>
    <property type="evidence" value="ECO:0007669"/>
    <property type="project" value="UniProtKB-SubCell"/>
</dbReference>
<dbReference type="GO" id="GO:0000015">
    <property type="term" value="C:phosphopyruvate hydratase complex"/>
    <property type="evidence" value="ECO:0007669"/>
    <property type="project" value="InterPro"/>
</dbReference>
<dbReference type="GO" id="GO:0000287">
    <property type="term" value="F:magnesium ion binding"/>
    <property type="evidence" value="ECO:0007669"/>
    <property type="project" value="UniProtKB-UniRule"/>
</dbReference>
<dbReference type="GO" id="GO:0004634">
    <property type="term" value="F:phosphopyruvate hydratase activity"/>
    <property type="evidence" value="ECO:0007669"/>
    <property type="project" value="UniProtKB-UniRule"/>
</dbReference>
<dbReference type="GO" id="GO:0006096">
    <property type="term" value="P:glycolytic process"/>
    <property type="evidence" value="ECO:0007669"/>
    <property type="project" value="UniProtKB-UniRule"/>
</dbReference>
<dbReference type="CDD" id="cd03313">
    <property type="entry name" value="enolase"/>
    <property type="match status" value="1"/>
</dbReference>
<dbReference type="FunFam" id="3.20.20.120:FF:000001">
    <property type="entry name" value="Enolase"/>
    <property type="match status" value="1"/>
</dbReference>
<dbReference type="FunFam" id="3.30.390.10:FF:000001">
    <property type="entry name" value="Enolase"/>
    <property type="match status" value="1"/>
</dbReference>
<dbReference type="Gene3D" id="3.20.20.120">
    <property type="entry name" value="Enolase-like C-terminal domain"/>
    <property type="match status" value="1"/>
</dbReference>
<dbReference type="Gene3D" id="3.30.390.10">
    <property type="entry name" value="Enolase-like, N-terminal domain"/>
    <property type="match status" value="1"/>
</dbReference>
<dbReference type="HAMAP" id="MF_00318">
    <property type="entry name" value="Enolase"/>
    <property type="match status" value="1"/>
</dbReference>
<dbReference type="InterPro" id="IPR000941">
    <property type="entry name" value="Enolase"/>
</dbReference>
<dbReference type="InterPro" id="IPR036849">
    <property type="entry name" value="Enolase-like_C_sf"/>
</dbReference>
<dbReference type="InterPro" id="IPR029017">
    <property type="entry name" value="Enolase-like_N"/>
</dbReference>
<dbReference type="InterPro" id="IPR020810">
    <property type="entry name" value="Enolase_C"/>
</dbReference>
<dbReference type="InterPro" id="IPR020809">
    <property type="entry name" value="Enolase_CS"/>
</dbReference>
<dbReference type="InterPro" id="IPR020811">
    <property type="entry name" value="Enolase_N"/>
</dbReference>
<dbReference type="NCBIfam" id="TIGR01060">
    <property type="entry name" value="eno"/>
    <property type="match status" value="1"/>
</dbReference>
<dbReference type="PANTHER" id="PTHR11902">
    <property type="entry name" value="ENOLASE"/>
    <property type="match status" value="1"/>
</dbReference>
<dbReference type="PANTHER" id="PTHR11902:SF1">
    <property type="entry name" value="ENOLASE"/>
    <property type="match status" value="1"/>
</dbReference>
<dbReference type="Pfam" id="PF00113">
    <property type="entry name" value="Enolase_C"/>
    <property type="match status" value="1"/>
</dbReference>
<dbReference type="Pfam" id="PF03952">
    <property type="entry name" value="Enolase_N"/>
    <property type="match status" value="1"/>
</dbReference>
<dbReference type="PIRSF" id="PIRSF001400">
    <property type="entry name" value="Enolase"/>
    <property type="match status" value="1"/>
</dbReference>
<dbReference type="PRINTS" id="PR00148">
    <property type="entry name" value="ENOLASE"/>
</dbReference>
<dbReference type="SFLD" id="SFLDF00002">
    <property type="entry name" value="enolase"/>
    <property type="match status" value="1"/>
</dbReference>
<dbReference type="SFLD" id="SFLDG00178">
    <property type="entry name" value="enolase"/>
    <property type="match status" value="1"/>
</dbReference>
<dbReference type="SMART" id="SM01192">
    <property type="entry name" value="Enolase_C"/>
    <property type="match status" value="1"/>
</dbReference>
<dbReference type="SMART" id="SM01193">
    <property type="entry name" value="Enolase_N"/>
    <property type="match status" value="1"/>
</dbReference>
<dbReference type="SUPFAM" id="SSF51604">
    <property type="entry name" value="Enolase C-terminal domain-like"/>
    <property type="match status" value="1"/>
</dbReference>
<dbReference type="SUPFAM" id="SSF54826">
    <property type="entry name" value="Enolase N-terminal domain-like"/>
    <property type="match status" value="1"/>
</dbReference>
<dbReference type="PROSITE" id="PS00164">
    <property type="entry name" value="ENOLASE"/>
    <property type="match status" value="1"/>
</dbReference>
<gene>
    <name evidence="1" type="primary">eno</name>
    <name type="ordered locus">BB3703</name>
</gene>
<name>ENO_BORBR</name>
<evidence type="ECO:0000255" key="1">
    <source>
        <dbReference type="HAMAP-Rule" id="MF_00318"/>
    </source>
</evidence>
<reference key="1">
    <citation type="journal article" date="2003" name="Nat. Genet.">
        <title>Comparative analysis of the genome sequences of Bordetella pertussis, Bordetella parapertussis and Bordetella bronchiseptica.</title>
        <authorList>
            <person name="Parkhill J."/>
            <person name="Sebaihia M."/>
            <person name="Preston A."/>
            <person name="Murphy L.D."/>
            <person name="Thomson N.R."/>
            <person name="Harris D.E."/>
            <person name="Holden M.T.G."/>
            <person name="Churcher C.M."/>
            <person name="Bentley S.D."/>
            <person name="Mungall K.L."/>
            <person name="Cerdeno-Tarraga A.-M."/>
            <person name="Temple L."/>
            <person name="James K.D."/>
            <person name="Harris B."/>
            <person name="Quail M.A."/>
            <person name="Achtman M."/>
            <person name="Atkin R."/>
            <person name="Baker S."/>
            <person name="Basham D."/>
            <person name="Bason N."/>
            <person name="Cherevach I."/>
            <person name="Chillingworth T."/>
            <person name="Collins M."/>
            <person name="Cronin A."/>
            <person name="Davis P."/>
            <person name="Doggett J."/>
            <person name="Feltwell T."/>
            <person name="Goble A."/>
            <person name="Hamlin N."/>
            <person name="Hauser H."/>
            <person name="Holroyd S."/>
            <person name="Jagels K."/>
            <person name="Leather S."/>
            <person name="Moule S."/>
            <person name="Norberczak H."/>
            <person name="O'Neil S."/>
            <person name="Ormond D."/>
            <person name="Price C."/>
            <person name="Rabbinowitsch E."/>
            <person name="Rutter S."/>
            <person name="Sanders M."/>
            <person name="Saunders D."/>
            <person name="Seeger K."/>
            <person name="Sharp S."/>
            <person name="Simmonds M."/>
            <person name="Skelton J."/>
            <person name="Squares R."/>
            <person name="Squares S."/>
            <person name="Stevens K."/>
            <person name="Unwin L."/>
            <person name="Whitehead S."/>
            <person name="Barrell B.G."/>
            <person name="Maskell D.J."/>
        </authorList>
    </citation>
    <scope>NUCLEOTIDE SEQUENCE [LARGE SCALE GENOMIC DNA]</scope>
    <source>
        <strain>ATCC BAA-588 / NCTC 13252 / RB50</strain>
    </source>
</reference>
<sequence>MSAIVDIIGREILDSRGNPTVECDVLLESGAMGRASVPSGASTGSREAIELRDGDKGRYLGKGVLRAVENLNTEISEALMGLDAQEQTFVDRTLIELDGTDSKERLGANAMLAASMAVARAAADESGLSLYRYFGGSGPMSMPVPMMNVINGGAHANNTLDLQELMILPVGAASFREALRWGAEVFHMLKKLIHDQGMSTAVGDEGGFAPNVASHEAAIQLILKAITEAGYEPGTQIALGLDCASSEFYRDGKYTLAGEGGVSLSSQEFANLLATWCDKYPIISIEDGMAENDWDGWKLLTDQLGKKVQLVGDDLFVTNTRILREGIQKGVANSILIKINQIGTLTETFAAIEMAKRAGYTAVVSHRSGETEDSTIADIAVATNAMQIKTGSLSRSDRMAKYNQLLRIEEELAEVASYPGLEAFYNLR</sequence>
<keyword id="KW-0963">Cytoplasm</keyword>
<keyword id="KW-0324">Glycolysis</keyword>
<keyword id="KW-0456">Lyase</keyword>
<keyword id="KW-0460">Magnesium</keyword>
<keyword id="KW-0479">Metal-binding</keyword>
<keyword id="KW-0964">Secreted</keyword>
<protein>
    <recommendedName>
        <fullName evidence="1">Enolase</fullName>
        <ecNumber evidence="1">4.2.1.11</ecNumber>
    </recommendedName>
    <alternativeName>
        <fullName evidence="1">2-phospho-D-glycerate hydro-lyase</fullName>
    </alternativeName>
    <alternativeName>
        <fullName evidence="1">2-phosphoglycerate dehydratase</fullName>
    </alternativeName>
</protein>
<accession>Q7WD75</accession>
<organism>
    <name type="scientific">Bordetella bronchiseptica (strain ATCC BAA-588 / NCTC 13252 / RB50)</name>
    <name type="common">Alcaligenes bronchisepticus</name>
    <dbReference type="NCBI Taxonomy" id="257310"/>
    <lineage>
        <taxon>Bacteria</taxon>
        <taxon>Pseudomonadati</taxon>
        <taxon>Pseudomonadota</taxon>
        <taxon>Betaproteobacteria</taxon>
        <taxon>Burkholderiales</taxon>
        <taxon>Alcaligenaceae</taxon>
        <taxon>Bordetella</taxon>
    </lineage>
</organism>
<comment type="function">
    <text evidence="1">Catalyzes the reversible conversion of 2-phosphoglycerate (2-PG) into phosphoenolpyruvate (PEP). It is essential for the degradation of carbohydrates via glycolysis.</text>
</comment>
<comment type="catalytic activity">
    <reaction evidence="1">
        <text>(2R)-2-phosphoglycerate = phosphoenolpyruvate + H2O</text>
        <dbReference type="Rhea" id="RHEA:10164"/>
        <dbReference type="ChEBI" id="CHEBI:15377"/>
        <dbReference type="ChEBI" id="CHEBI:58289"/>
        <dbReference type="ChEBI" id="CHEBI:58702"/>
        <dbReference type="EC" id="4.2.1.11"/>
    </reaction>
</comment>
<comment type="cofactor">
    <cofactor evidence="1">
        <name>Mg(2+)</name>
        <dbReference type="ChEBI" id="CHEBI:18420"/>
    </cofactor>
    <text evidence="1">Binds a second Mg(2+) ion via substrate during catalysis.</text>
</comment>
<comment type="pathway">
    <text evidence="1">Carbohydrate degradation; glycolysis; pyruvate from D-glyceraldehyde 3-phosphate: step 4/5.</text>
</comment>
<comment type="subcellular location">
    <subcellularLocation>
        <location evidence="1">Cytoplasm</location>
    </subcellularLocation>
    <subcellularLocation>
        <location evidence="1">Secreted</location>
    </subcellularLocation>
    <subcellularLocation>
        <location evidence="1">Cell surface</location>
    </subcellularLocation>
    <text evidence="1">Fractions of enolase are present in both the cytoplasm and on the cell surface.</text>
</comment>
<comment type="similarity">
    <text evidence="1">Belongs to the enolase family.</text>
</comment>
<feature type="chain" id="PRO_0000133847" description="Enolase">
    <location>
        <begin position="1"/>
        <end position="428"/>
    </location>
</feature>
<feature type="active site" description="Proton donor" evidence="1">
    <location>
        <position position="205"/>
    </location>
</feature>
<feature type="active site" description="Proton acceptor" evidence="1">
    <location>
        <position position="338"/>
    </location>
</feature>
<feature type="binding site" evidence="1">
    <location>
        <position position="163"/>
    </location>
    <ligand>
        <name>(2R)-2-phosphoglycerate</name>
        <dbReference type="ChEBI" id="CHEBI:58289"/>
    </ligand>
</feature>
<feature type="binding site" evidence="1">
    <location>
        <position position="242"/>
    </location>
    <ligand>
        <name>Mg(2+)</name>
        <dbReference type="ChEBI" id="CHEBI:18420"/>
    </ligand>
</feature>
<feature type="binding site" evidence="1">
    <location>
        <position position="286"/>
    </location>
    <ligand>
        <name>Mg(2+)</name>
        <dbReference type="ChEBI" id="CHEBI:18420"/>
    </ligand>
</feature>
<feature type="binding site" evidence="1">
    <location>
        <position position="313"/>
    </location>
    <ligand>
        <name>Mg(2+)</name>
        <dbReference type="ChEBI" id="CHEBI:18420"/>
    </ligand>
</feature>
<feature type="binding site" evidence="1">
    <location>
        <position position="338"/>
    </location>
    <ligand>
        <name>(2R)-2-phosphoglycerate</name>
        <dbReference type="ChEBI" id="CHEBI:58289"/>
    </ligand>
</feature>
<feature type="binding site" evidence="1">
    <location>
        <position position="367"/>
    </location>
    <ligand>
        <name>(2R)-2-phosphoglycerate</name>
        <dbReference type="ChEBI" id="CHEBI:58289"/>
    </ligand>
</feature>
<feature type="binding site" evidence="1">
    <location>
        <position position="368"/>
    </location>
    <ligand>
        <name>(2R)-2-phosphoglycerate</name>
        <dbReference type="ChEBI" id="CHEBI:58289"/>
    </ligand>
</feature>
<feature type="binding site" evidence="1">
    <location>
        <position position="389"/>
    </location>
    <ligand>
        <name>(2R)-2-phosphoglycerate</name>
        <dbReference type="ChEBI" id="CHEBI:58289"/>
    </ligand>
</feature>